<gene>
    <name type="primary">nxnl1</name>
</gene>
<evidence type="ECO:0000250" key="1">
    <source>
        <dbReference type="UniProtKB" id="Q8VC33"/>
    </source>
</evidence>
<evidence type="ECO:0000256" key="2">
    <source>
        <dbReference type="SAM" id="MobiDB-lite"/>
    </source>
</evidence>
<evidence type="ECO:0000305" key="3"/>
<organism>
    <name type="scientific">Xenopus laevis</name>
    <name type="common">African clawed frog</name>
    <dbReference type="NCBI Taxonomy" id="8355"/>
    <lineage>
        <taxon>Eukaryota</taxon>
        <taxon>Metazoa</taxon>
        <taxon>Chordata</taxon>
        <taxon>Craniata</taxon>
        <taxon>Vertebrata</taxon>
        <taxon>Euteleostomi</taxon>
        <taxon>Amphibia</taxon>
        <taxon>Batrachia</taxon>
        <taxon>Anura</taxon>
        <taxon>Pipoidea</taxon>
        <taxon>Pipidae</taxon>
        <taxon>Xenopodinae</taxon>
        <taxon>Xenopus</taxon>
        <taxon>Xenopus</taxon>
    </lineage>
</organism>
<comment type="function">
    <text evidence="1">Plays an important role in retinal cone photoreceptor survival (By similarity). May play a role in cone cell viability, slowing down cone degeneration, does not seem to play a role in degenerating rods (By similarity).</text>
</comment>
<comment type="subcellular location">
    <subcellularLocation>
        <location evidence="1">Cell projection</location>
        <location evidence="1">Cilium</location>
        <location evidence="1">Photoreceptor outer segment</location>
    </subcellularLocation>
</comment>
<comment type="similarity">
    <text evidence="3">Belongs to the nucleoredoxin family.</text>
</comment>
<reference key="1">
    <citation type="submission" date="2004-08" db="EMBL/GenBank/DDBJ databases">
        <authorList>
            <consortium name="NIH - Xenopus Gene Collection (XGC) project"/>
        </authorList>
    </citation>
    <scope>NUCLEOTIDE SEQUENCE [LARGE SCALE MRNA]</scope>
    <source>
        <tissue>Brain</tissue>
    </source>
</reference>
<sequence length="215" mass="25400">MADLFLDKILVKNNRDQDELDTEREIWERLENRVILLFFAKSRSSQCQEFAPLLKDFFVRLTDEFYVDRSSQLALVYVSLDQSEEEQERFLKDMPKRWLFVPFKDEEFRRNLEAQFSVSRVPVLVVLKPSGHVISFNAVDEVVRLGPPCFKNWQEVSEIIDRSFLLPEFTDDRAGRSMTDPIRRIKYKDETTNEKKKRKHCDDEDEGGGGGTEFF</sequence>
<dbReference type="EMBL" id="BC080091">
    <property type="protein sequence ID" value="AAH80091.1"/>
    <property type="molecule type" value="mRNA"/>
</dbReference>
<dbReference type="RefSeq" id="NP_001087547.1">
    <property type="nucleotide sequence ID" value="NM_001094078.1"/>
</dbReference>
<dbReference type="SMR" id="Q68EV9"/>
<dbReference type="DNASU" id="447371"/>
<dbReference type="GeneID" id="447371"/>
<dbReference type="KEGG" id="xla:447371"/>
<dbReference type="AGR" id="Xenbase:XB-GENE-961005"/>
<dbReference type="CTD" id="447371"/>
<dbReference type="Xenbase" id="XB-GENE-961005">
    <property type="gene designation" value="nxnl1.L"/>
</dbReference>
<dbReference type="OMA" id="KTMPKRW"/>
<dbReference type="OrthoDB" id="189920at2759"/>
<dbReference type="Proteomes" id="UP000186698">
    <property type="component" value="Chromosome 3L"/>
</dbReference>
<dbReference type="Bgee" id="447371">
    <property type="expression patterns" value="Expressed in camera-type eye and 1 other cell type or tissue"/>
</dbReference>
<dbReference type="GO" id="GO:0005739">
    <property type="term" value="C:mitochondrion"/>
    <property type="evidence" value="ECO:0007669"/>
    <property type="project" value="TreeGrafter"/>
</dbReference>
<dbReference type="GO" id="GO:0001750">
    <property type="term" value="C:photoreceptor outer segment"/>
    <property type="evidence" value="ECO:0007669"/>
    <property type="project" value="UniProtKB-SubCell"/>
</dbReference>
<dbReference type="GO" id="GO:0045494">
    <property type="term" value="P:photoreceptor cell maintenance"/>
    <property type="evidence" value="ECO:0000250"/>
    <property type="project" value="UniProtKB"/>
</dbReference>
<dbReference type="CDD" id="cd03008">
    <property type="entry name" value="TryX_like_RdCVF"/>
    <property type="match status" value="1"/>
</dbReference>
<dbReference type="Gene3D" id="3.40.30.10">
    <property type="entry name" value="Glutaredoxin"/>
    <property type="match status" value="1"/>
</dbReference>
<dbReference type="InterPro" id="IPR029520">
    <property type="entry name" value="RdCVF"/>
</dbReference>
<dbReference type="InterPro" id="IPR012336">
    <property type="entry name" value="Thioredoxin-like_fold"/>
</dbReference>
<dbReference type="InterPro" id="IPR036249">
    <property type="entry name" value="Thioredoxin-like_sf"/>
</dbReference>
<dbReference type="PANTHER" id="PTHR47109">
    <property type="entry name" value="NUCLEOREDOXIN-LIKE PROTEIN 1"/>
    <property type="match status" value="1"/>
</dbReference>
<dbReference type="PANTHER" id="PTHR47109:SF1">
    <property type="entry name" value="NUCLEOREDOXIN-LIKE PROTEIN 1"/>
    <property type="match status" value="1"/>
</dbReference>
<dbReference type="Pfam" id="PF13905">
    <property type="entry name" value="Thioredoxin_8"/>
    <property type="match status" value="1"/>
</dbReference>
<dbReference type="SUPFAM" id="SSF52833">
    <property type="entry name" value="Thioredoxin-like"/>
    <property type="match status" value="1"/>
</dbReference>
<protein>
    <recommendedName>
        <fullName>Nucleoredoxin-like protein 1</fullName>
    </recommendedName>
</protein>
<keyword id="KW-0966">Cell projection</keyword>
<keyword id="KW-1185">Reference proteome</keyword>
<name>NXNL1_XENLA</name>
<feature type="chain" id="PRO_0000319546" description="Nucleoredoxin-like protein 1">
    <location>
        <begin position="1"/>
        <end position="215"/>
    </location>
</feature>
<feature type="domain" description="Thioredoxin; atypical">
    <location>
        <begin position="1"/>
        <end position="165"/>
    </location>
</feature>
<feature type="region of interest" description="Disordered" evidence="2">
    <location>
        <begin position="185"/>
        <end position="215"/>
    </location>
</feature>
<feature type="compositionally biased region" description="Basic and acidic residues" evidence="2">
    <location>
        <begin position="185"/>
        <end position="194"/>
    </location>
</feature>
<proteinExistence type="evidence at transcript level"/>
<accession>Q68EV9</accession>